<proteinExistence type="inferred from homology"/>
<reference key="1">
    <citation type="journal article" date="2002" name="Proc. Natl. Acad. Sci. U.S.A.">
        <title>Extensive mosaic structure revealed by the complete genome sequence of uropathogenic Escherichia coli.</title>
        <authorList>
            <person name="Welch R.A."/>
            <person name="Burland V."/>
            <person name="Plunkett G. III"/>
            <person name="Redford P."/>
            <person name="Roesch P."/>
            <person name="Rasko D."/>
            <person name="Buckles E.L."/>
            <person name="Liou S.-R."/>
            <person name="Boutin A."/>
            <person name="Hackett J."/>
            <person name="Stroud D."/>
            <person name="Mayhew G.F."/>
            <person name="Rose D.J."/>
            <person name="Zhou S."/>
            <person name="Schwartz D.C."/>
            <person name="Perna N.T."/>
            <person name="Mobley H.L.T."/>
            <person name="Donnenberg M.S."/>
            <person name="Blattner F.R."/>
        </authorList>
    </citation>
    <scope>NUCLEOTIDE SEQUENCE [LARGE SCALE GENOMIC DNA]</scope>
    <source>
        <strain>CFT073 / ATCC 700928 / UPEC</strain>
    </source>
</reference>
<dbReference type="EMBL" id="AE014075">
    <property type="protein sequence ID" value="AAN83219.1"/>
    <property type="molecule type" value="Genomic_DNA"/>
</dbReference>
<dbReference type="RefSeq" id="WP_000459600.1">
    <property type="nucleotide sequence ID" value="NZ_CP051263.1"/>
</dbReference>
<dbReference type="SMR" id="Q8FBI7"/>
<dbReference type="STRING" id="199310.c4786"/>
<dbReference type="KEGG" id="ecc:c4786"/>
<dbReference type="eggNOG" id="COG1826">
    <property type="taxonomic scope" value="Bacteria"/>
</dbReference>
<dbReference type="HOGENOM" id="CLU_086034_1_0_6"/>
<dbReference type="BioCyc" id="ECOL199310:C4786-MONOMER"/>
<dbReference type="Proteomes" id="UP000001410">
    <property type="component" value="Chromosome"/>
</dbReference>
<dbReference type="GO" id="GO:0033281">
    <property type="term" value="C:TAT protein transport complex"/>
    <property type="evidence" value="ECO:0007669"/>
    <property type="project" value="UniProtKB-UniRule"/>
</dbReference>
<dbReference type="GO" id="GO:0008320">
    <property type="term" value="F:protein transmembrane transporter activity"/>
    <property type="evidence" value="ECO:0007669"/>
    <property type="project" value="UniProtKB-UniRule"/>
</dbReference>
<dbReference type="GO" id="GO:0043953">
    <property type="term" value="P:protein transport by the Tat complex"/>
    <property type="evidence" value="ECO:0007669"/>
    <property type="project" value="UniProtKB-UniRule"/>
</dbReference>
<dbReference type="FunFam" id="1.20.5.3310:FF:000002">
    <property type="entry name" value="Sec-independent protein translocase protein TatB"/>
    <property type="match status" value="1"/>
</dbReference>
<dbReference type="Gene3D" id="1.20.5.3310">
    <property type="match status" value="1"/>
</dbReference>
<dbReference type="HAMAP" id="MF_00237">
    <property type="entry name" value="TatB"/>
    <property type="match status" value="1"/>
</dbReference>
<dbReference type="InterPro" id="IPR018448">
    <property type="entry name" value="TatB"/>
</dbReference>
<dbReference type="NCBIfam" id="TIGR01410">
    <property type="entry name" value="tatB"/>
    <property type="match status" value="1"/>
</dbReference>
<dbReference type="PANTHER" id="PTHR33162">
    <property type="entry name" value="SEC-INDEPENDENT PROTEIN TRANSLOCASE PROTEIN TATA, CHLOROPLASTIC"/>
    <property type="match status" value="1"/>
</dbReference>
<dbReference type="PANTHER" id="PTHR33162:SF1">
    <property type="entry name" value="SEC-INDEPENDENT PROTEIN TRANSLOCASE PROTEIN TATA, CHLOROPLASTIC"/>
    <property type="match status" value="1"/>
</dbReference>
<dbReference type="PRINTS" id="PR01506">
    <property type="entry name" value="TATBPROTEIN"/>
</dbReference>
<gene>
    <name evidence="1" type="primary">tatB</name>
    <name type="ordered locus">c4786</name>
</gene>
<keyword id="KW-0997">Cell inner membrane</keyword>
<keyword id="KW-1003">Cell membrane</keyword>
<keyword id="KW-0472">Membrane</keyword>
<keyword id="KW-0653">Protein transport</keyword>
<keyword id="KW-1185">Reference proteome</keyword>
<keyword id="KW-0811">Translocation</keyword>
<keyword id="KW-0812">Transmembrane</keyword>
<keyword id="KW-1133">Transmembrane helix</keyword>
<keyword id="KW-0813">Transport</keyword>
<comment type="function">
    <text evidence="1">Part of the twin-arginine translocation (Tat) system that transports large folded proteins containing a characteristic twin-arginine motif in their signal peptide across membranes. Together with TatC, TatB is part of a receptor directly interacting with Tat signal peptides. TatB may form an oligomeric binding site that transiently accommodates folded Tat precursor proteins before their translocation.</text>
</comment>
<comment type="subunit">
    <text evidence="1">The Tat system comprises two distinct complexes: a TatABC complex, containing multiple copies of TatA, TatB and TatC subunits, and a separate TatA complex, containing only TatA subunits. Substrates initially bind to the TatABC complex, which probably triggers association of the separate TatA complex to form the active translocon.</text>
</comment>
<comment type="subcellular location">
    <subcellularLocation>
        <location evidence="1">Cell inner membrane</location>
        <topology evidence="1">Single-pass membrane protein</topology>
    </subcellularLocation>
</comment>
<comment type="similarity">
    <text evidence="1">Belongs to the TatB family.</text>
</comment>
<feature type="chain" id="PRO_0000192655" description="Sec-independent protein translocase protein TatB">
    <location>
        <begin position="1"/>
        <end position="171"/>
    </location>
</feature>
<feature type="transmembrane region" description="Helical" evidence="1">
    <location>
        <begin position="1"/>
        <end position="21"/>
    </location>
</feature>
<feature type="region of interest" description="Disordered" evidence="2">
    <location>
        <begin position="117"/>
        <end position="171"/>
    </location>
</feature>
<feature type="compositionally biased region" description="Polar residues" evidence="2">
    <location>
        <begin position="130"/>
        <end position="139"/>
    </location>
</feature>
<organism>
    <name type="scientific">Escherichia coli O6:H1 (strain CFT073 / ATCC 700928 / UPEC)</name>
    <dbReference type="NCBI Taxonomy" id="199310"/>
    <lineage>
        <taxon>Bacteria</taxon>
        <taxon>Pseudomonadati</taxon>
        <taxon>Pseudomonadota</taxon>
        <taxon>Gammaproteobacteria</taxon>
        <taxon>Enterobacterales</taxon>
        <taxon>Enterobacteriaceae</taxon>
        <taxon>Escherichia</taxon>
    </lineage>
</organism>
<accession>Q8FBI7</accession>
<evidence type="ECO:0000255" key="1">
    <source>
        <dbReference type="HAMAP-Rule" id="MF_00237"/>
    </source>
</evidence>
<evidence type="ECO:0000256" key="2">
    <source>
        <dbReference type="SAM" id="MobiDB-lite"/>
    </source>
</evidence>
<name>TATB_ECOL6</name>
<sequence length="171" mass="18451">MFDIGFSELLLVFIIGLVVLGPQRLPVAVKTVAGWIRALRSLATTVQNELTQELKLQEFQDSLKKVEKASLTNLTPELKASMDELRQAAESMKRSYVANDPEKASDEAHTIHNPVVKDNETAHEGVTPAAAQTQASSPEQKPETTPEPVVKPAADAEPKTAAPSPSSSDKP</sequence>
<protein>
    <recommendedName>
        <fullName evidence="1">Sec-independent protein translocase protein TatB</fullName>
    </recommendedName>
</protein>